<organism>
    <name type="scientific">Shigella sonnei (strain Ss046)</name>
    <dbReference type="NCBI Taxonomy" id="300269"/>
    <lineage>
        <taxon>Bacteria</taxon>
        <taxon>Pseudomonadati</taxon>
        <taxon>Pseudomonadota</taxon>
        <taxon>Gammaproteobacteria</taxon>
        <taxon>Enterobacterales</taxon>
        <taxon>Enterobacteriaceae</taxon>
        <taxon>Shigella</taxon>
    </lineage>
</organism>
<evidence type="ECO:0000255" key="1">
    <source>
        <dbReference type="HAMAP-Rule" id="MF_00471"/>
    </source>
</evidence>
<name>RRAA_SHISS</name>
<feature type="chain" id="PRO_1000013875" description="Regulator of ribonuclease activity A">
    <location>
        <begin position="1"/>
        <end position="161"/>
    </location>
</feature>
<gene>
    <name evidence="1" type="primary">rraA</name>
    <name type="ordered locus">SSON_4098</name>
</gene>
<accession>Q3YV49</accession>
<sequence length="161" mass="17360">MKYDTSELCDIYQEDVNVVEPLFSNFGGRASFGGQIITVKCFEDNGLLYDLLEQNGRGRVLVVDGGGSVRRALVDAELARLAVQNEWEGLVIYGAVRQVDDLEELDIGIQAMAAIPVGAAGEGIGESDVRVNFGGVTFFSGDHLYADNTGIILSEDPLDIE</sequence>
<proteinExistence type="inferred from homology"/>
<comment type="function">
    <text evidence="1">Globally modulates RNA abundance by binding to RNase E (Rne) and regulating its endonucleolytic activity. Can modulate Rne action in a substrate-dependent manner by altering the composition of the degradosome. Modulates RNA-binding and helicase activities of the degradosome.</text>
</comment>
<comment type="subunit">
    <text evidence="1">Homotrimer. Binds to both RNA-binding sites in the C-terminal region of Rne and to RhlB.</text>
</comment>
<comment type="subcellular location">
    <subcellularLocation>
        <location evidence="1">Cytoplasm</location>
    </subcellularLocation>
</comment>
<comment type="similarity">
    <text evidence="1">Belongs to the RraA family.</text>
</comment>
<dbReference type="EMBL" id="CP000038">
    <property type="protein sequence ID" value="AAZ90613.1"/>
    <property type="molecule type" value="Genomic_DNA"/>
</dbReference>
<dbReference type="RefSeq" id="WP_000872908.1">
    <property type="nucleotide sequence ID" value="NC_007384.1"/>
</dbReference>
<dbReference type="SMR" id="Q3YV49"/>
<dbReference type="GeneID" id="93777969"/>
<dbReference type="KEGG" id="ssn:SSON_4098"/>
<dbReference type="HOGENOM" id="CLU_072626_4_0_6"/>
<dbReference type="Proteomes" id="UP000002529">
    <property type="component" value="Chromosome"/>
</dbReference>
<dbReference type="GO" id="GO:0005829">
    <property type="term" value="C:cytosol"/>
    <property type="evidence" value="ECO:0007669"/>
    <property type="project" value="TreeGrafter"/>
</dbReference>
<dbReference type="GO" id="GO:0060698">
    <property type="term" value="F:endoribonuclease inhibitor activity"/>
    <property type="evidence" value="ECO:0007669"/>
    <property type="project" value="UniProtKB-UniRule"/>
</dbReference>
<dbReference type="GO" id="GO:0019899">
    <property type="term" value="F:enzyme binding"/>
    <property type="evidence" value="ECO:0007669"/>
    <property type="project" value="UniProtKB-UniRule"/>
</dbReference>
<dbReference type="GO" id="GO:1902369">
    <property type="term" value="P:negative regulation of RNA catabolic process"/>
    <property type="evidence" value="ECO:0007669"/>
    <property type="project" value="TreeGrafter"/>
</dbReference>
<dbReference type="CDD" id="cd16841">
    <property type="entry name" value="RraA_family"/>
    <property type="match status" value="1"/>
</dbReference>
<dbReference type="FunFam" id="3.50.30.40:FF:000001">
    <property type="entry name" value="Regulator of ribonuclease activity A"/>
    <property type="match status" value="1"/>
</dbReference>
<dbReference type="Gene3D" id="3.50.30.40">
    <property type="entry name" value="Ribonuclease E inhibitor RraA/RraA-like"/>
    <property type="match status" value="1"/>
</dbReference>
<dbReference type="HAMAP" id="MF_00471">
    <property type="entry name" value="RraA"/>
    <property type="match status" value="1"/>
</dbReference>
<dbReference type="InterPro" id="IPR010203">
    <property type="entry name" value="RraA"/>
</dbReference>
<dbReference type="InterPro" id="IPR005493">
    <property type="entry name" value="RraA/RraA-like"/>
</dbReference>
<dbReference type="InterPro" id="IPR036704">
    <property type="entry name" value="RraA/RraA-like_sf"/>
</dbReference>
<dbReference type="InterPro" id="IPR014339">
    <property type="entry name" value="RraA_gpbac"/>
</dbReference>
<dbReference type="NCBIfam" id="TIGR01935">
    <property type="entry name" value="NOT-MenG"/>
    <property type="match status" value="1"/>
</dbReference>
<dbReference type="NCBIfam" id="NF006875">
    <property type="entry name" value="PRK09372.1"/>
    <property type="match status" value="1"/>
</dbReference>
<dbReference type="NCBIfam" id="TIGR02998">
    <property type="entry name" value="RraA_entero"/>
    <property type="match status" value="1"/>
</dbReference>
<dbReference type="PANTHER" id="PTHR33254">
    <property type="entry name" value="4-HYDROXY-4-METHYL-2-OXOGLUTARATE ALDOLASE 3-RELATED"/>
    <property type="match status" value="1"/>
</dbReference>
<dbReference type="PANTHER" id="PTHR33254:SF29">
    <property type="entry name" value="REGULATOR OF RIBONUCLEASE ACTIVITY A"/>
    <property type="match status" value="1"/>
</dbReference>
<dbReference type="Pfam" id="PF03737">
    <property type="entry name" value="RraA-like"/>
    <property type="match status" value="1"/>
</dbReference>
<dbReference type="SUPFAM" id="SSF89562">
    <property type="entry name" value="RraA-like"/>
    <property type="match status" value="1"/>
</dbReference>
<protein>
    <recommendedName>
        <fullName evidence="1">Regulator of ribonuclease activity A</fullName>
    </recommendedName>
</protein>
<reference key="1">
    <citation type="journal article" date="2005" name="Nucleic Acids Res.">
        <title>Genome dynamics and diversity of Shigella species, the etiologic agents of bacillary dysentery.</title>
        <authorList>
            <person name="Yang F."/>
            <person name="Yang J."/>
            <person name="Zhang X."/>
            <person name="Chen L."/>
            <person name="Jiang Y."/>
            <person name="Yan Y."/>
            <person name="Tang X."/>
            <person name="Wang J."/>
            <person name="Xiong Z."/>
            <person name="Dong J."/>
            <person name="Xue Y."/>
            <person name="Zhu Y."/>
            <person name="Xu X."/>
            <person name="Sun L."/>
            <person name="Chen S."/>
            <person name="Nie H."/>
            <person name="Peng J."/>
            <person name="Xu J."/>
            <person name="Wang Y."/>
            <person name="Yuan Z."/>
            <person name="Wen Y."/>
            <person name="Yao Z."/>
            <person name="Shen Y."/>
            <person name="Qiang B."/>
            <person name="Hou Y."/>
            <person name="Yu J."/>
            <person name="Jin Q."/>
        </authorList>
    </citation>
    <scope>NUCLEOTIDE SEQUENCE [LARGE SCALE GENOMIC DNA]</scope>
    <source>
        <strain>Ss046</strain>
    </source>
</reference>
<keyword id="KW-0963">Cytoplasm</keyword>
<keyword id="KW-1185">Reference proteome</keyword>